<accession>Q2UEX1</accession>
<keyword id="KW-0012">Acyltransferase</keyword>
<keyword id="KW-0156">Chromatin regulator</keyword>
<keyword id="KW-0963">Cytoplasm</keyword>
<keyword id="KW-0227">DNA damage</keyword>
<keyword id="KW-0234">DNA repair</keyword>
<keyword id="KW-0539">Nucleus</keyword>
<keyword id="KW-1185">Reference proteome</keyword>
<keyword id="KW-0808">Transferase</keyword>
<feature type="chain" id="PRO_0000227718" description="Histone acetyltransferase type B catalytic subunit">
    <location>
        <begin position="1"/>
        <end position="511"/>
    </location>
</feature>
<feature type="region of interest" description="Interaction with histone H4 N-terminus" evidence="3">
    <location>
        <begin position="44"/>
        <end position="46"/>
    </location>
</feature>
<feature type="region of interest" description="Interaction with histone H4 N-terminus" evidence="3">
    <location>
        <begin position="210"/>
        <end position="212"/>
    </location>
</feature>
<feature type="region of interest" description="Disordered" evidence="4">
    <location>
        <begin position="455"/>
        <end position="511"/>
    </location>
</feature>
<feature type="compositionally biased region" description="Acidic residues" evidence="4">
    <location>
        <begin position="493"/>
        <end position="503"/>
    </location>
</feature>
<feature type="active site" description="Proton donor/acceptor" evidence="3">
    <location>
        <position position="284"/>
    </location>
</feature>
<feature type="binding site" evidence="3">
    <location>
        <begin position="249"/>
        <end position="251"/>
    </location>
    <ligand>
        <name>acetyl-CoA</name>
        <dbReference type="ChEBI" id="CHEBI:57288"/>
    </ligand>
</feature>
<feature type="binding site" evidence="3">
    <location>
        <begin position="256"/>
        <end position="262"/>
    </location>
    <ligand>
        <name>acetyl-CoA</name>
        <dbReference type="ChEBI" id="CHEBI:57288"/>
    </ligand>
</feature>
<feature type="site" description="Interaction with histone H4 N-terminus" evidence="2">
    <location>
        <position position="182"/>
    </location>
</feature>
<proteinExistence type="inferred from homology"/>
<sequence>MASEGDWTCDANDAVQITLVQPGEQKPKTLSSFHPQFTYPIFGDDETIFGYKGLIIRLRFAAHDLRPHIHISYDEKFKTVGDTSAVDLIKTLSPFIPEEAFSTLPDYENAVQEDKDAKDFVPPGKLVHNYVTRGRTYEIWAASLADPQVRRLLDRAQVFVSLFIEAGTPLETEDPEWTLERWTVYFVYEKVKPPTPTASQYSIVGYATTYRWWFYQRDSPEKGTVTNDPFPGPEIRPAQLPARLRIAQFLILPPHQGSGHGTHLYTTIHTACFNDSTIVELTVEDPNEAFDALRDTADFHILRPEFLKHNVNINPDPYAELSKKQRPRRVPTSALIPTKLLHDIRSTYKIASTQFAHVLEMFLLGEIPTKNRHAGGANMSRLLVKKYNATDPNERRYYWWRMLVKQRLFKRSRDILIQLEMSDRIEKLEETVTNVEEGYEALIKVFTAREEALMAKQEESGESPETAVLEDSVASSSDSSTRDQRTKRKFTVEDEDEEEEGESEVSKRPKV</sequence>
<organism>
    <name type="scientific">Aspergillus oryzae (strain ATCC 42149 / RIB 40)</name>
    <name type="common">Yellow koji mold</name>
    <dbReference type="NCBI Taxonomy" id="510516"/>
    <lineage>
        <taxon>Eukaryota</taxon>
        <taxon>Fungi</taxon>
        <taxon>Dikarya</taxon>
        <taxon>Ascomycota</taxon>
        <taxon>Pezizomycotina</taxon>
        <taxon>Eurotiomycetes</taxon>
        <taxon>Eurotiomycetidae</taxon>
        <taxon>Eurotiales</taxon>
        <taxon>Aspergillaceae</taxon>
        <taxon>Aspergillus</taxon>
        <taxon>Aspergillus subgen. Circumdati</taxon>
    </lineage>
</organism>
<protein>
    <recommendedName>
        <fullName>Histone acetyltransferase type B catalytic subunit</fullName>
        <ecNumber evidence="3">2.3.1.48</ecNumber>
    </recommendedName>
</protein>
<gene>
    <name type="primary">hat1</name>
    <name type="ORF">AO090026000444</name>
</gene>
<reference key="1">
    <citation type="journal article" date="2005" name="Nature">
        <title>Genome sequencing and analysis of Aspergillus oryzae.</title>
        <authorList>
            <person name="Machida M."/>
            <person name="Asai K."/>
            <person name="Sano M."/>
            <person name="Tanaka T."/>
            <person name="Kumagai T."/>
            <person name="Terai G."/>
            <person name="Kusumoto K."/>
            <person name="Arima T."/>
            <person name="Akita O."/>
            <person name="Kashiwagi Y."/>
            <person name="Abe K."/>
            <person name="Gomi K."/>
            <person name="Horiuchi H."/>
            <person name="Kitamoto K."/>
            <person name="Kobayashi T."/>
            <person name="Takeuchi M."/>
            <person name="Denning D.W."/>
            <person name="Galagan J.E."/>
            <person name="Nierman W.C."/>
            <person name="Yu J."/>
            <person name="Archer D.B."/>
            <person name="Bennett J.W."/>
            <person name="Bhatnagar D."/>
            <person name="Cleveland T.E."/>
            <person name="Fedorova N.D."/>
            <person name="Gotoh O."/>
            <person name="Horikawa H."/>
            <person name="Hosoyama A."/>
            <person name="Ichinomiya M."/>
            <person name="Igarashi R."/>
            <person name="Iwashita K."/>
            <person name="Juvvadi P.R."/>
            <person name="Kato M."/>
            <person name="Kato Y."/>
            <person name="Kin T."/>
            <person name="Kokubun A."/>
            <person name="Maeda H."/>
            <person name="Maeyama N."/>
            <person name="Maruyama J."/>
            <person name="Nagasaki H."/>
            <person name="Nakajima T."/>
            <person name="Oda K."/>
            <person name="Okada K."/>
            <person name="Paulsen I."/>
            <person name="Sakamoto K."/>
            <person name="Sawano T."/>
            <person name="Takahashi M."/>
            <person name="Takase K."/>
            <person name="Terabayashi Y."/>
            <person name="Wortman J.R."/>
            <person name="Yamada O."/>
            <person name="Yamagata Y."/>
            <person name="Anazawa H."/>
            <person name="Hata Y."/>
            <person name="Koide Y."/>
            <person name="Komori T."/>
            <person name="Koyama Y."/>
            <person name="Minetoki T."/>
            <person name="Suharnan S."/>
            <person name="Tanaka A."/>
            <person name="Isono K."/>
            <person name="Kuhara S."/>
            <person name="Ogasawara N."/>
            <person name="Kikuchi H."/>
        </authorList>
    </citation>
    <scope>NUCLEOTIDE SEQUENCE [LARGE SCALE GENOMIC DNA]</scope>
    <source>
        <strain>ATCC 42149 / RIB 40</strain>
    </source>
</reference>
<evidence type="ECO:0000250" key="1"/>
<evidence type="ECO:0000250" key="2">
    <source>
        <dbReference type="UniProtKB" id="O14929"/>
    </source>
</evidence>
<evidence type="ECO:0000250" key="3">
    <source>
        <dbReference type="UniProtKB" id="Q12341"/>
    </source>
</evidence>
<evidence type="ECO:0000256" key="4">
    <source>
        <dbReference type="SAM" id="MobiDB-lite"/>
    </source>
</evidence>
<evidence type="ECO:0000305" key="5"/>
<comment type="function">
    <text evidence="3">Catalytic component of the histone acetylase B (HAT-B) complex. Acetylates 'Lys-12' of histone H4 which is required for telomeric silencing. Has intrinsic substrate specificity that modifies lysine in recognition sequence GXGKXG. Involved in DNA double-strand break repair.</text>
</comment>
<comment type="catalytic activity">
    <reaction evidence="3">
        <text>L-lysyl-[protein] + acetyl-CoA = N(6)-acetyl-L-lysyl-[protein] + CoA + H(+)</text>
        <dbReference type="Rhea" id="RHEA:45948"/>
        <dbReference type="Rhea" id="RHEA-COMP:9752"/>
        <dbReference type="Rhea" id="RHEA-COMP:10731"/>
        <dbReference type="ChEBI" id="CHEBI:15378"/>
        <dbReference type="ChEBI" id="CHEBI:29969"/>
        <dbReference type="ChEBI" id="CHEBI:57287"/>
        <dbReference type="ChEBI" id="CHEBI:57288"/>
        <dbReference type="ChEBI" id="CHEBI:61930"/>
        <dbReference type="EC" id="2.3.1.48"/>
    </reaction>
</comment>
<comment type="subunit">
    <text evidence="3">Component of the HAT-B complex composed of at least hat1 and hat2. The HAT-B complex binds to histone H4 tail.</text>
</comment>
<comment type="subcellular location">
    <subcellularLocation>
        <location evidence="1">Cytoplasm</location>
    </subcellularLocation>
    <subcellularLocation>
        <location evidence="1">Nucleus</location>
    </subcellularLocation>
</comment>
<comment type="similarity">
    <text evidence="5">Belongs to the HAT1 family.</text>
</comment>
<dbReference type="EC" id="2.3.1.48" evidence="3"/>
<dbReference type="EMBL" id="BA000051">
    <property type="protein sequence ID" value="BAE59894.1"/>
    <property type="molecule type" value="Genomic_DNA"/>
</dbReference>
<dbReference type="RefSeq" id="XP_001821896.1">
    <property type="nucleotide sequence ID" value="XM_001821844.1"/>
</dbReference>
<dbReference type="SMR" id="Q2UEX1"/>
<dbReference type="STRING" id="510516.Q2UEX1"/>
<dbReference type="EnsemblFungi" id="BAE59894">
    <property type="protein sequence ID" value="BAE59894"/>
    <property type="gene ID" value="AO090026000444"/>
</dbReference>
<dbReference type="GeneID" id="5993924"/>
<dbReference type="KEGG" id="aor:AO090026000444"/>
<dbReference type="VEuPathDB" id="FungiDB:AO090026000444"/>
<dbReference type="HOGENOM" id="CLU_036024_2_1_1"/>
<dbReference type="OMA" id="WTCDAND"/>
<dbReference type="OrthoDB" id="29191at5052"/>
<dbReference type="Proteomes" id="UP000006564">
    <property type="component" value="Chromosome 3"/>
</dbReference>
<dbReference type="GO" id="GO:0000781">
    <property type="term" value="C:chromosome, telomeric region"/>
    <property type="evidence" value="ECO:0007669"/>
    <property type="project" value="GOC"/>
</dbReference>
<dbReference type="GO" id="GO:0005737">
    <property type="term" value="C:cytoplasm"/>
    <property type="evidence" value="ECO:0007669"/>
    <property type="project" value="UniProtKB-SubCell"/>
</dbReference>
<dbReference type="GO" id="GO:0005634">
    <property type="term" value="C:nucleus"/>
    <property type="evidence" value="ECO:0007669"/>
    <property type="project" value="UniProtKB-SubCell"/>
</dbReference>
<dbReference type="GO" id="GO:0004402">
    <property type="term" value="F:histone acetyltransferase activity"/>
    <property type="evidence" value="ECO:0007669"/>
    <property type="project" value="UniProtKB-EC"/>
</dbReference>
<dbReference type="GO" id="GO:0006281">
    <property type="term" value="P:DNA repair"/>
    <property type="evidence" value="ECO:0007669"/>
    <property type="project" value="UniProtKB-KW"/>
</dbReference>
<dbReference type="GO" id="GO:0031509">
    <property type="term" value="P:subtelomeric heterochromatin formation"/>
    <property type="evidence" value="ECO:0007669"/>
    <property type="project" value="InterPro"/>
</dbReference>
<dbReference type="FunFam" id="3.40.630.30:FF:000125">
    <property type="entry name" value="Histone acetyltransferase type B catalytic subunit"/>
    <property type="match status" value="1"/>
</dbReference>
<dbReference type="Gene3D" id="3.40.630.30">
    <property type="match status" value="1"/>
</dbReference>
<dbReference type="Gene3D" id="3.90.360.10">
    <property type="entry name" value="Histone acetyl transferase 1 (HAT1), N-terminal domain"/>
    <property type="match status" value="1"/>
</dbReference>
<dbReference type="InterPro" id="IPR016181">
    <property type="entry name" value="Acyl_CoA_acyltransferase"/>
</dbReference>
<dbReference type="InterPro" id="IPR019467">
    <property type="entry name" value="Hat1_N"/>
</dbReference>
<dbReference type="InterPro" id="IPR037113">
    <property type="entry name" value="Hat1_N_sf"/>
</dbReference>
<dbReference type="InterPro" id="IPR017380">
    <property type="entry name" value="Hist_AcTrfase_B-typ_cat-su"/>
</dbReference>
<dbReference type="PANTHER" id="PTHR12046">
    <property type="entry name" value="HISTONE ACETYLTRANSFERASE TYPE B CATALYTIC SUBUNIT"/>
    <property type="match status" value="1"/>
</dbReference>
<dbReference type="Pfam" id="PF10394">
    <property type="entry name" value="Hat1_N"/>
    <property type="match status" value="1"/>
</dbReference>
<dbReference type="PIRSF" id="PIRSF038084">
    <property type="entry name" value="HAT-B_cat"/>
    <property type="match status" value="1"/>
</dbReference>
<dbReference type="SUPFAM" id="SSF55729">
    <property type="entry name" value="Acyl-CoA N-acyltransferases (Nat)"/>
    <property type="match status" value="1"/>
</dbReference>
<name>HAT1_ASPOR</name>